<accession>Q9K0C6</accession>
<keyword id="KW-0028">Amino-acid biosynthesis</keyword>
<keyword id="KW-0057">Aromatic amino acid biosynthesis</keyword>
<keyword id="KW-0413">Isomerase</keyword>
<keyword id="KW-1185">Reference proteome</keyword>
<keyword id="KW-0822">Tryptophan biosynthesis</keyword>
<name>TRPF_NEIMB</name>
<comment type="catalytic activity">
    <reaction evidence="1">
        <text>N-(5-phospho-beta-D-ribosyl)anthranilate = 1-(2-carboxyphenylamino)-1-deoxy-D-ribulose 5-phosphate</text>
        <dbReference type="Rhea" id="RHEA:21540"/>
        <dbReference type="ChEBI" id="CHEBI:18277"/>
        <dbReference type="ChEBI" id="CHEBI:58613"/>
        <dbReference type="EC" id="5.3.1.24"/>
    </reaction>
</comment>
<comment type="pathway">
    <text evidence="1">Amino-acid biosynthesis; L-tryptophan biosynthesis; L-tryptophan from chorismate: step 3/5.</text>
</comment>
<comment type="similarity">
    <text evidence="1">Belongs to the TrpF family.</text>
</comment>
<reference key="1">
    <citation type="journal article" date="2000" name="Science">
        <title>Complete genome sequence of Neisseria meningitidis serogroup B strain MC58.</title>
        <authorList>
            <person name="Tettelin H."/>
            <person name="Saunders N.J."/>
            <person name="Heidelberg J.F."/>
            <person name="Jeffries A.C."/>
            <person name="Nelson K.E."/>
            <person name="Eisen J.A."/>
            <person name="Ketchum K.A."/>
            <person name="Hood D.W."/>
            <person name="Peden J.F."/>
            <person name="Dodson R.J."/>
            <person name="Nelson W.C."/>
            <person name="Gwinn M.L."/>
            <person name="DeBoy R.T."/>
            <person name="Peterson J.D."/>
            <person name="Hickey E.K."/>
            <person name="Haft D.H."/>
            <person name="Salzberg S.L."/>
            <person name="White O."/>
            <person name="Fleischmann R.D."/>
            <person name="Dougherty B.A."/>
            <person name="Mason T.M."/>
            <person name="Ciecko A."/>
            <person name="Parksey D.S."/>
            <person name="Blair E."/>
            <person name="Cittone H."/>
            <person name="Clark E.B."/>
            <person name="Cotton M.D."/>
            <person name="Utterback T.R."/>
            <person name="Khouri H.M."/>
            <person name="Qin H."/>
            <person name="Vamathevan J.J."/>
            <person name="Gill J."/>
            <person name="Scarlato V."/>
            <person name="Masignani V."/>
            <person name="Pizza M."/>
            <person name="Grandi G."/>
            <person name="Sun L."/>
            <person name="Smith H.O."/>
            <person name="Fraser C.M."/>
            <person name="Moxon E.R."/>
            <person name="Rappuoli R."/>
            <person name="Venter J.C."/>
        </authorList>
    </citation>
    <scope>NUCLEOTIDE SEQUENCE [LARGE SCALE GENOMIC DNA]</scope>
    <source>
        <strain>ATCC BAA-335 / MC58</strain>
    </source>
</reference>
<feature type="chain" id="PRO_0000154367" description="N-(5'-phosphoribosyl)anthranilate isomerase">
    <location>
        <begin position="1"/>
        <end position="208"/>
    </location>
</feature>
<sequence length="208" mass="22242">MRKIRTKICGITTPEDAAAAAAAGADAVGLVFFQGSSRAVDIARAKKITAALPPFVSVVALFVNESAQNIRRILAEVPIHIIQFHGDEDDAFCRQFHRPYIKAIRVQTASDIRNAATRFPDAQALLFDAYHPSEYGGTGNRFDWTLLAEYSGKPWVLAGGLTPENVGEAVRITGAESVDVSGGVEASKGKKDAAKVAAFIATANRLSR</sequence>
<evidence type="ECO:0000255" key="1">
    <source>
        <dbReference type="HAMAP-Rule" id="MF_00135"/>
    </source>
</evidence>
<dbReference type="EC" id="5.3.1.24" evidence="1"/>
<dbReference type="EMBL" id="AE002098">
    <property type="protein sequence ID" value="AAF41106.1"/>
    <property type="molecule type" value="Genomic_DNA"/>
</dbReference>
<dbReference type="PIR" id="G81169">
    <property type="entry name" value="G81169"/>
</dbReference>
<dbReference type="RefSeq" id="NP_273730.1">
    <property type="nucleotide sequence ID" value="NC_003112.2"/>
</dbReference>
<dbReference type="RefSeq" id="WP_002225494.1">
    <property type="nucleotide sequence ID" value="NC_003112.2"/>
</dbReference>
<dbReference type="SMR" id="Q9K0C6"/>
<dbReference type="STRING" id="122586.NMB0688"/>
<dbReference type="PaxDb" id="122586-NMB0688"/>
<dbReference type="KEGG" id="nme:NMB0688"/>
<dbReference type="PATRIC" id="fig|122586.8.peg.873"/>
<dbReference type="HOGENOM" id="CLU_076364_2_0_4"/>
<dbReference type="InParanoid" id="Q9K0C6"/>
<dbReference type="OrthoDB" id="9796196at2"/>
<dbReference type="UniPathway" id="UPA00035">
    <property type="reaction ID" value="UER00042"/>
</dbReference>
<dbReference type="Proteomes" id="UP000000425">
    <property type="component" value="Chromosome"/>
</dbReference>
<dbReference type="GO" id="GO:0004640">
    <property type="term" value="F:phosphoribosylanthranilate isomerase activity"/>
    <property type="evidence" value="ECO:0000318"/>
    <property type="project" value="GO_Central"/>
</dbReference>
<dbReference type="GO" id="GO:0000162">
    <property type="term" value="P:L-tryptophan biosynthetic process"/>
    <property type="evidence" value="ECO:0000318"/>
    <property type="project" value="GO_Central"/>
</dbReference>
<dbReference type="CDD" id="cd00405">
    <property type="entry name" value="PRAI"/>
    <property type="match status" value="1"/>
</dbReference>
<dbReference type="FunFam" id="3.20.20.70:FF:000075">
    <property type="entry name" value="Tryptophan biosynthesis protein TRP1"/>
    <property type="match status" value="1"/>
</dbReference>
<dbReference type="Gene3D" id="3.20.20.70">
    <property type="entry name" value="Aldolase class I"/>
    <property type="match status" value="1"/>
</dbReference>
<dbReference type="HAMAP" id="MF_00135">
    <property type="entry name" value="PRAI"/>
    <property type="match status" value="1"/>
</dbReference>
<dbReference type="InterPro" id="IPR013785">
    <property type="entry name" value="Aldolase_TIM"/>
</dbReference>
<dbReference type="InterPro" id="IPR001240">
    <property type="entry name" value="PRAI_dom"/>
</dbReference>
<dbReference type="InterPro" id="IPR011060">
    <property type="entry name" value="RibuloseP-bd_barrel"/>
</dbReference>
<dbReference type="InterPro" id="IPR044643">
    <property type="entry name" value="TrpF_fam"/>
</dbReference>
<dbReference type="NCBIfam" id="NF002298">
    <property type="entry name" value="PRK01222.1-4"/>
    <property type="match status" value="1"/>
</dbReference>
<dbReference type="PANTHER" id="PTHR42894">
    <property type="entry name" value="N-(5'-PHOSPHORIBOSYL)ANTHRANILATE ISOMERASE"/>
    <property type="match status" value="1"/>
</dbReference>
<dbReference type="PANTHER" id="PTHR42894:SF1">
    <property type="entry name" value="N-(5'-PHOSPHORIBOSYL)ANTHRANILATE ISOMERASE"/>
    <property type="match status" value="1"/>
</dbReference>
<dbReference type="Pfam" id="PF00697">
    <property type="entry name" value="PRAI"/>
    <property type="match status" value="1"/>
</dbReference>
<dbReference type="SUPFAM" id="SSF51366">
    <property type="entry name" value="Ribulose-phoshate binding barrel"/>
    <property type="match status" value="1"/>
</dbReference>
<gene>
    <name evidence="1" type="primary">trpF</name>
    <name type="ordered locus">NMB0688</name>
</gene>
<organism>
    <name type="scientific">Neisseria meningitidis serogroup B (strain ATCC BAA-335 / MC58)</name>
    <dbReference type="NCBI Taxonomy" id="122586"/>
    <lineage>
        <taxon>Bacteria</taxon>
        <taxon>Pseudomonadati</taxon>
        <taxon>Pseudomonadota</taxon>
        <taxon>Betaproteobacteria</taxon>
        <taxon>Neisseriales</taxon>
        <taxon>Neisseriaceae</taxon>
        <taxon>Neisseria</taxon>
    </lineage>
</organism>
<proteinExistence type="inferred from homology"/>
<protein>
    <recommendedName>
        <fullName evidence="1">N-(5'-phosphoribosyl)anthranilate isomerase</fullName>
        <shortName evidence="1">PRAI</shortName>
        <ecNumber evidence="1">5.3.1.24</ecNumber>
    </recommendedName>
</protein>